<keyword id="KW-1185">Reference proteome</keyword>
<keyword id="KW-0677">Repeat</keyword>
<keyword id="KW-0853">WD repeat</keyword>
<reference key="1">
    <citation type="journal article" date="2003" name="PLoS Biol.">
        <title>The genome sequence of Caenorhabditis briggsae: a platform for comparative genomics.</title>
        <authorList>
            <person name="Stein L.D."/>
            <person name="Bao Z."/>
            <person name="Blasiar D."/>
            <person name="Blumenthal T."/>
            <person name="Brent M.R."/>
            <person name="Chen N."/>
            <person name="Chinwalla A."/>
            <person name="Clarke L."/>
            <person name="Clee C."/>
            <person name="Coghlan A."/>
            <person name="Coulson A."/>
            <person name="D'Eustachio P."/>
            <person name="Fitch D.H.A."/>
            <person name="Fulton L.A."/>
            <person name="Fulton R.E."/>
            <person name="Griffiths-Jones S."/>
            <person name="Harris T.W."/>
            <person name="Hillier L.W."/>
            <person name="Kamath R."/>
            <person name="Kuwabara P.E."/>
            <person name="Mardis E.R."/>
            <person name="Marra M.A."/>
            <person name="Miner T.L."/>
            <person name="Minx P."/>
            <person name="Mullikin J.C."/>
            <person name="Plumb R.W."/>
            <person name="Rogers J."/>
            <person name="Schein J.E."/>
            <person name="Sohrmann M."/>
            <person name="Spieth J."/>
            <person name="Stajich J.E."/>
            <person name="Wei C."/>
            <person name="Willey D."/>
            <person name="Wilson R.K."/>
            <person name="Durbin R.M."/>
            <person name="Waterston R.H."/>
        </authorList>
    </citation>
    <scope>NUCLEOTIDE SEQUENCE [LARGE SCALE GENOMIC DNA]</scope>
    <source>
        <strain>AF16</strain>
    </source>
</reference>
<gene>
    <name type="primary">wdr-23</name>
    <name type="ORF">CBG11954</name>
</gene>
<accession>A8XEN7</accession>
<protein>
    <recommendedName>
        <fullName>DDB1- and CUL4-associated factor 11 homolog</fullName>
    </recommendedName>
    <alternativeName>
        <fullName evidence="1">WD repeat-containing protein 23</fullName>
    </alternativeName>
</protein>
<proteinExistence type="inferred from homology"/>
<name>DCA11_CAEBR</name>
<sequence length="554" mass="62976">MYAKKFTGSDPQTVRTAAEIVALQRMKNRNDSDTDFSDDDEETSGGCPKMTPQEEQRMFEREQQIAFSGRCTIGDPESCHQLRTDINHRCGPRPSTSSNATWNILNRDVQRRNGPVMTSASRAHLLNTHLPNKKRRVDQLRTKNFCAQYIQNGRKMVVSSQGERENSFLSTKSGKIEISLPILSMQRTPCGPLQLVDLDTAVNQQGDLISYCTWKDAVYIGRMEQEDNQNITWFPIDWHGEHAVQNQCAVFCVRFSDDSEQIVCGTSEYSIHVFDVEQRRRIRTIVNAHEDDVNSVCFADYGSNLIYSAGDDGLVKVWDKRAWSDGDVIPVGVFAGHRDGVTYVDSRQDERYLLSNSKDQTIKVWDLRKFSCQGGVEATRACVQSQHWDYRWQPAPPGLCQPVQGDTSVMTLRGHSVLHTLVRAKFSPENTGRRFIYTGCARGEIVVYDIVTGTVSRRLKGHQAVVRECDWHPQENEIVSTSWDGVTTVWTWDERAEGVIAPYDHPNIHQFGDEDSCDELYQPIKKPQRKLRKPISARNAKCPTTSSEPDDFQI</sequence>
<dbReference type="EMBL" id="HE601540">
    <property type="protein sequence ID" value="CAP31005.2"/>
    <property type="molecule type" value="Genomic_DNA"/>
</dbReference>
<dbReference type="SMR" id="A8XEN7"/>
<dbReference type="FunCoup" id="A8XEN7">
    <property type="interactions" value="2320"/>
</dbReference>
<dbReference type="STRING" id="6238.A8XEN7"/>
<dbReference type="WormBase" id="CBG11954a">
    <property type="protein sequence ID" value="CBP39249"/>
    <property type="gene ID" value="WBGene00032973"/>
    <property type="gene designation" value="Cbr-wdr-23"/>
</dbReference>
<dbReference type="eggNOG" id="KOG0266">
    <property type="taxonomic scope" value="Eukaryota"/>
</dbReference>
<dbReference type="HOGENOM" id="CLU_014280_3_1_1"/>
<dbReference type="InParanoid" id="A8XEN7"/>
<dbReference type="OMA" id="CDELYQP"/>
<dbReference type="Proteomes" id="UP000008549">
    <property type="component" value="Unassembled WGS sequence"/>
</dbReference>
<dbReference type="GO" id="GO:0080008">
    <property type="term" value="C:Cul4-RING E3 ubiquitin ligase complex"/>
    <property type="evidence" value="ECO:0000318"/>
    <property type="project" value="GO_Central"/>
</dbReference>
<dbReference type="GO" id="GO:0008340">
    <property type="term" value="P:determination of adult lifespan"/>
    <property type="evidence" value="ECO:0000250"/>
    <property type="project" value="UniProtKB"/>
</dbReference>
<dbReference type="GO" id="GO:0043161">
    <property type="term" value="P:proteasome-mediated ubiquitin-dependent protein catabolic process"/>
    <property type="evidence" value="ECO:0000318"/>
    <property type="project" value="GO_Central"/>
</dbReference>
<dbReference type="FunFam" id="2.130.10.10:FF:001891">
    <property type="entry name" value="DDB1-and CUL4-associated factor 11 homolog"/>
    <property type="match status" value="1"/>
</dbReference>
<dbReference type="Gene3D" id="2.130.10.10">
    <property type="entry name" value="YVTN repeat-like/Quinoprotein amine dehydrogenase"/>
    <property type="match status" value="2"/>
</dbReference>
<dbReference type="InterPro" id="IPR051859">
    <property type="entry name" value="DCAF"/>
</dbReference>
<dbReference type="InterPro" id="IPR017399">
    <property type="entry name" value="DCAF11/LEC14B"/>
</dbReference>
<dbReference type="InterPro" id="IPR015943">
    <property type="entry name" value="WD40/YVTN_repeat-like_dom_sf"/>
</dbReference>
<dbReference type="InterPro" id="IPR036322">
    <property type="entry name" value="WD40_repeat_dom_sf"/>
</dbReference>
<dbReference type="InterPro" id="IPR001680">
    <property type="entry name" value="WD40_rpt"/>
</dbReference>
<dbReference type="PANTHER" id="PTHR19847">
    <property type="entry name" value="DDB1- AND CUL4-ASSOCIATED FACTOR 11"/>
    <property type="match status" value="1"/>
</dbReference>
<dbReference type="PANTHER" id="PTHR19847:SF7">
    <property type="entry name" value="DDB1- AND CUL4-ASSOCIATED FACTOR 11"/>
    <property type="match status" value="1"/>
</dbReference>
<dbReference type="Pfam" id="PF00400">
    <property type="entry name" value="WD40"/>
    <property type="match status" value="4"/>
</dbReference>
<dbReference type="PIRSF" id="PIRSF038135">
    <property type="entry name" value="WD_repeat_p23"/>
    <property type="match status" value="1"/>
</dbReference>
<dbReference type="SMART" id="SM00320">
    <property type="entry name" value="WD40"/>
    <property type="match status" value="5"/>
</dbReference>
<dbReference type="SUPFAM" id="SSF50978">
    <property type="entry name" value="WD40 repeat-like"/>
    <property type="match status" value="1"/>
</dbReference>
<dbReference type="PROSITE" id="PS50082">
    <property type="entry name" value="WD_REPEATS_2"/>
    <property type="match status" value="3"/>
</dbReference>
<dbReference type="PROSITE" id="PS50294">
    <property type="entry name" value="WD_REPEATS_REGION"/>
    <property type="match status" value="2"/>
</dbReference>
<evidence type="ECO:0000250" key="1">
    <source>
        <dbReference type="UniProtKB" id="P90794"/>
    </source>
</evidence>
<evidence type="ECO:0000255" key="2"/>
<evidence type="ECO:0000256" key="3">
    <source>
        <dbReference type="SAM" id="MobiDB-lite"/>
    </source>
</evidence>
<feature type="chain" id="PRO_0000358603" description="DDB1- and CUL4-associated factor 11 homolog">
    <location>
        <begin position="1"/>
        <end position="554"/>
    </location>
</feature>
<feature type="repeat" description="WD 1" evidence="2">
    <location>
        <begin position="245"/>
        <end position="284"/>
    </location>
</feature>
<feature type="repeat" description="WD 2" evidence="2">
    <location>
        <begin position="288"/>
        <end position="328"/>
    </location>
</feature>
<feature type="repeat" description="WD 3" evidence="2">
    <location>
        <begin position="336"/>
        <end position="375"/>
    </location>
</feature>
<feature type="repeat" description="WD 4" evidence="2">
    <location>
        <begin position="414"/>
        <end position="458"/>
    </location>
</feature>
<feature type="repeat" description="WD 5" evidence="2">
    <location>
        <begin position="461"/>
        <end position="500"/>
    </location>
</feature>
<feature type="region of interest" description="Disordered" evidence="3">
    <location>
        <begin position="24"/>
        <end position="52"/>
    </location>
</feature>
<feature type="region of interest" description="Disordered" evidence="3">
    <location>
        <begin position="527"/>
        <end position="554"/>
    </location>
</feature>
<feature type="compositionally biased region" description="Acidic residues" evidence="3">
    <location>
        <begin position="33"/>
        <end position="43"/>
    </location>
</feature>
<comment type="function">
    <text evidence="1">Involved in regulation of lifespan. Required for dopaminergic CEP neuron degeneration in response to Mn(2+).</text>
</comment>
<comment type="similarity">
    <text evidence="2">Belongs to the WD repeat LEC14B family.</text>
</comment>
<organism>
    <name type="scientific">Caenorhabditis briggsae</name>
    <dbReference type="NCBI Taxonomy" id="6238"/>
    <lineage>
        <taxon>Eukaryota</taxon>
        <taxon>Metazoa</taxon>
        <taxon>Ecdysozoa</taxon>
        <taxon>Nematoda</taxon>
        <taxon>Chromadorea</taxon>
        <taxon>Rhabditida</taxon>
        <taxon>Rhabditina</taxon>
        <taxon>Rhabditomorpha</taxon>
        <taxon>Rhabditoidea</taxon>
        <taxon>Rhabditidae</taxon>
        <taxon>Peloderinae</taxon>
        <taxon>Caenorhabditis</taxon>
    </lineage>
</organism>